<proteinExistence type="inferred from homology"/>
<reference key="1">
    <citation type="journal article" date="2002" name="Genome Res.">
        <title>The genome of Methanosarcina acetivorans reveals extensive metabolic and physiological diversity.</title>
        <authorList>
            <person name="Galagan J.E."/>
            <person name="Nusbaum C."/>
            <person name="Roy A."/>
            <person name="Endrizzi M.G."/>
            <person name="Macdonald P."/>
            <person name="FitzHugh W."/>
            <person name="Calvo S."/>
            <person name="Engels R."/>
            <person name="Smirnov S."/>
            <person name="Atnoor D."/>
            <person name="Brown A."/>
            <person name="Allen N."/>
            <person name="Naylor J."/>
            <person name="Stange-Thomann N."/>
            <person name="DeArellano K."/>
            <person name="Johnson R."/>
            <person name="Linton L."/>
            <person name="McEwan P."/>
            <person name="McKernan K."/>
            <person name="Talamas J."/>
            <person name="Tirrell A."/>
            <person name="Ye W."/>
            <person name="Zimmer A."/>
            <person name="Barber R.D."/>
            <person name="Cann I."/>
            <person name="Graham D.E."/>
            <person name="Grahame D.A."/>
            <person name="Guss A.M."/>
            <person name="Hedderich R."/>
            <person name="Ingram-Smith C."/>
            <person name="Kuettner H.C."/>
            <person name="Krzycki J.A."/>
            <person name="Leigh J.A."/>
            <person name="Li W."/>
            <person name="Liu J."/>
            <person name="Mukhopadhyay B."/>
            <person name="Reeve J.N."/>
            <person name="Smith K."/>
            <person name="Springer T.A."/>
            <person name="Umayam L.A."/>
            <person name="White O."/>
            <person name="White R.H."/>
            <person name="de Macario E.C."/>
            <person name="Ferry J.G."/>
            <person name="Jarrell K.F."/>
            <person name="Jing H."/>
            <person name="Macario A.J.L."/>
            <person name="Paulsen I.T."/>
            <person name="Pritchett M."/>
            <person name="Sowers K.R."/>
            <person name="Swanson R.V."/>
            <person name="Zinder S.H."/>
            <person name="Lander E."/>
            <person name="Metcalf W.W."/>
            <person name="Birren B."/>
        </authorList>
    </citation>
    <scope>NUCLEOTIDE SEQUENCE [LARGE SCALE GENOMIC DNA]</scope>
    <source>
        <strain>ATCC 35395 / DSM 2834 / JCM 12185 / C2A</strain>
    </source>
</reference>
<accession>Q8TPX7</accession>
<protein>
    <recommendedName>
        <fullName evidence="1">Exosome complex component Rrp4</fullName>
    </recommendedName>
</protein>
<keyword id="KW-0963">Cytoplasm</keyword>
<keyword id="KW-0271">Exosome</keyword>
<keyword id="KW-1185">Reference proteome</keyword>
<keyword id="KW-0694">RNA-binding</keyword>
<dbReference type="EMBL" id="AE010299">
    <property type="protein sequence ID" value="AAM05183.1"/>
    <property type="molecule type" value="Genomic_DNA"/>
</dbReference>
<dbReference type="RefSeq" id="WP_011021780.1">
    <property type="nucleotide sequence ID" value="NC_003552.1"/>
</dbReference>
<dbReference type="SMR" id="Q8TPX7"/>
<dbReference type="STRING" id="188937.MA_1777"/>
<dbReference type="EnsemblBacteria" id="AAM05183">
    <property type="protein sequence ID" value="AAM05183"/>
    <property type="gene ID" value="MA_1777"/>
</dbReference>
<dbReference type="GeneID" id="1473666"/>
<dbReference type="KEGG" id="mac:MA_1777"/>
<dbReference type="HOGENOM" id="CLU_071769_0_0_2"/>
<dbReference type="InParanoid" id="Q8TPX7"/>
<dbReference type="OrthoDB" id="35160at2157"/>
<dbReference type="PhylomeDB" id="Q8TPX7"/>
<dbReference type="Proteomes" id="UP000002487">
    <property type="component" value="Chromosome"/>
</dbReference>
<dbReference type="GO" id="GO:0005737">
    <property type="term" value="C:cytoplasm"/>
    <property type="evidence" value="ECO:0007669"/>
    <property type="project" value="UniProtKB-SubCell"/>
</dbReference>
<dbReference type="GO" id="GO:0000178">
    <property type="term" value="C:exosome (RNase complex)"/>
    <property type="evidence" value="ECO:0000318"/>
    <property type="project" value="GO_Central"/>
</dbReference>
<dbReference type="GO" id="GO:0008143">
    <property type="term" value="F:poly(A) binding"/>
    <property type="evidence" value="ECO:0007669"/>
    <property type="project" value="InterPro"/>
</dbReference>
<dbReference type="GO" id="GO:0003723">
    <property type="term" value="F:RNA binding"/>
    <property type="evidence" value="ECO:0000318"/>
    <property type="project" value="GO_Central"/>
</dbReference>
<dbReference type="GO" id="GO:0071034">
    <property type="term" value="P:CUT catabolic process"/>
    <property type="evidence" value="ECO:0000318"/>
    <property type="project" value="GO_Central"/>
</dbReference>
<dbReference type="GO" id="GO:0000467">
    <property type="term" value="P:exonucleolytic trimming to generate mature 3'-end of 5.8S rRNA from tricistronic rRNA transcript (SSU-rRNA, 5.8S rRNA, LSU-rRNA)"/>
    <property type="evidence" value="ECO:0000318"/>
    <property type="project" value="GO_Central"/>
</dbReference>
<dbReference type="GO" id="GO:0071051">
    <property type="term" value="P:poly(A)-dependent snoRNA 3'-end processing"/>
    <property type="evidence" value="ECO:0000318"/>
    <property type="project" value="GO_Central"/>
</dbReference>
<dbReference type="GO" id="GO:0006401">
    <property type="term" value="P:RNA catabolic process"/>
    <property type="evidence" value="ECO:0007669"/>
    <property type="project" value="UniProtKB-UniRule"/>
</dbReference>
<dbReference type="GO" id="GO:0034475">
    <property type="term" value="P:U4 snRNA 3'-end processing"/>
    <property type="evidence" value="ECO:0000318"/>
    <property type="project" value="GO_Central"/>
</dbReference>
<dbReference type="CDD" id="cd22524">
    <property type="entry name" value="KH-I_Rrp4_prokar"/>
    <property type="match status" value="1"/>
</dbReference>
<dbReference type="CDD" id="cd05789">
    <property type="entry name" value="S1_Rrp4"/>
    <property type="match status" value="1"/>
</dbReference>
<dbReference type="FunFam" id="2.40.50.100:FF:000082">
    <property type="entry name" value="Exosome complex component Rrp4"/>
    <property type="match status" value="1"/>
</dbReference>
<dbReference type="FunFam" id="3.30.1370.10:FF:000095">
    <property type="entry name" value="Exosome complex component Rrp4"/>
    <property type="match status" value="1"/>
</dbReference>
<dbReference type="FunFam" id="2.40.50.140:FF:000127">
    <property type="entry name" value="Exosome complex component RRP40"/>
    <property type="match status" value="1"/>
</dbReference>
<dbReference type="Gene3D" id="2.40.50.100">
    <property type="match status" value="1"/>
</dbReference>
<dbReference type="Gene3D" id="3.30.1370.10">
    <property type="entry name" value="K Homology domain, type 1"/>
    <property type="match status" value="1"/>
</dbReference>
<dbReference type="Gene3D" id="2.40.50.140">
    <property type="entry name" value="Nucleic acid-binding proteins"/>
    <property type="match status" value="1"/>
</dbReference>
<dbReference type="HAMAP" id="MF_00623">
    <property type="entry name" value="Exosome_Rrp4"/>
    <property type="match status" value="1"/>
</dbReference>
<dbReference type="InterPro" id="IPR026699">
    <property type="entry name" value="Exosome_RNA_bind1/RRP40/RRP4"/>
</dbReference>
<dbReference type="InterPro" id="IPR004087">
    <property type="entry name" value="KH_dom"/>
</dbReference>
<dbReference type="InterPro" id="IPR004088">
    <property type="entry name" value="KH_dom_type_1"/>
</dbReference>
<dbReference type="InterPro" id="IPR036612">
    <property type="entry name" value="KH_dom_type_1_sf"/>
</dbReference>
<dbReference type="InterPro" id="IPR012340">
    <property type="entry name" value="NA-bd_OB-fold"/>
</dbReference>
<dbReference type="InterPro" id="IPR023474">
    <property type="entry name" value="Rrp4"/>
</dbReference>
<dbReference type="InterPro" id="IPR054371">
    <property type="entry name" value="RRP4_N"/>
</dbReference>
<dbReference type="InterPro" id="IPR048565">
    <property type="entry name" value="RRP4_S1"/>
</dbReference>
<dbReference type="InterPro" id="IPR003029">
    <property type="entry name" value="S1_domain"/>
</dbReference>
<dbReference type="NCBIfam" id="NF003181">
    <property type="entry name" value="PRK04163.1-1"/>
    <property type="match status" value="1"/>
</dbReference>
<dbReference type="PANTHER" id="PTHR21321:SF4">
    <property type="entry name" value="EXOSOME COMPLEX COMPONENT RRP4"/>
    <property type="match status" value="1"/>
</dbReference>
<dbReference type="PANTHER" id="PTHR21321">
    <property type="entry name" value="PNAS-3 RELATED"/>
    <property type="match status" value="1"/>
</dbReference>
<dbReference type="Pfam" id="PF22625">
    <property type="entry name" value="ECR1_N_2"/>
    <property type="match status" value="1"/>
</dbReference>
<dbReference type="Pfam" id="PF15985">
    <property type="entry name" value="KH_6"/>
    <property type="match status" value="1"/>
</dbReference>
<dbReference type="Pfam" id="PF00575">
    <property type="entry name" value="S1"/>
    <property type="match status" value="1"/>
</dbReference>
<dbReference type="SMART" id="SM00322">
    <property type="entry name" value="KH"/>
    <property type="match status" value="1"/>
</dbReference>
<dbReference type="SMART" id="SM00316">
    <property type="entry name" value="S1"/>
    <property type="match status" value="1"/>
</dbReference>
<dbReference type="SUPFAM" id="SSF54791">
    <property type="entry name" value="Eukaryotic type KH-domain (KH-domain type I)"/>
    <property type="match status" value="1"/>
</dbReference>
<dbReference type="SUPFAM" id="SSF50249">
    <property type="entry name" value="Nucleic acid-binding proteins"/>
    <property type="match status" value="1"/>
</dbReference>
<dbReference type="SUPFAM" id="SSF110324">
    <property type="entry name" value="Ribosomal L27 protein-like"/>
    <property type="match status" value="1"/>
</dbReference>
<dbReference type="PROSITE" id="PS50084">
    <property type="entry name" value="KH_TYPE_1"/>
    <property type="match status" value="1"/>
</dbReference>
<dbReference type="PROSITE" id="PS50126">
    <property type="entry name" value="S1"/>
    <property type="match status" value="1"/>
</dbReference>
<sequence>MDKKIVIPGDLLSENQKKAGYGTYVKNDKIYSSLCGIENLKEDKVGVIPLAGAYIPSANDVVIGIVIVVTPSNWIFDIAAPYDGLLHVSEYPRRVESREMPEILNVGDSVILRVKDVDSSMKVELALRDPSLHKLKTGQIIKVESVKVPRVIGHGGSMISMLKKETNCSIFVGQNGRIWIDGKDEDIELLSKALRKIELEAQRSGLTDRIYNFLKNERIRQKESKPVGFFKNETEGVTATKEDHSEEIYRKIDVLLDPKN</sequence>
<gene>
    <name evidence="1" type="primary">rrp4</name>
    <name type="ordered locus">MA_1777</name>
</gene>
<feature type="chain" id="PRO_0000050146" description="Exosome complex component Rrp4">
    <location>
        <begin position="1"/>
        <end position="260"/>
    </location>
</feature>
<feature type="domain" description="S1 motif" evidence="1">
    <location>
        <begin position="59"/>
        <end position="128"/>
    </location>
</feature>
<feature type="domain" description="KH" evidence="1">
    <location>
        <begin position="136"/>
        <end position="194"/>
    </location>
</feature>
<name>RRP4_METAC</name>
<comment type="function">
    <text evidence="1">Non-catalytic component of the exosome, which is a complex involved in RNA degradation. Increases the RNA binding and the efficiency of RNA degradation. Confers strong poly(A) specificity to the exosome.</text>
</comment>
<comment type="subunit">
    <text evidence="1">Component of the archaeal exosome complex. Forms a trimer of Rrp4 and/or Csl4 subunits. The trimer associates with a hexameric ring-like arrangement composed of 3 Rrp41-Rrp42 heterodimers.</text>
</comment>
<comment type="subcellular location">
    <subcellularLocation>
        <location evidence="1">Cytoplasm</location>
    </subcellularLocation>
</comment>
<comment type="similarity">
    <text evidence="1">Belongs to the RRP4 family.</text>
</comment>
<organism>
    <name type="scientific">Methanosarcina acetivorans (strain ATCC 35395 / DSM 2834 / JCM 12185 / C2A)</name>
    <dbReference type="NCBI Taxonomy" id="188937"/>
    <lineage>
        <taxon>Archaea</taxon>
        <taxon>Methanobacteriati</taxon>
        <taxon>Methanobacteriota</taxon>
        <taxon>Stenosarchaea group</taxon>
        <taxon>Methanomicrobia</taxon>
        <taxon>Methanosarcinales</taxon>
        <taxon>Methanosarcinaceae</taxon>
        <taxon>Methanosarcina</taxon>
    </lineage>
</organism>
<evidence type="ECO:0000255" key="1">
    <source>
        <dbReference type="HAMAP-Rule" id="MF_00623"/>
    </source>
</evidence>